<gene>
    <name evidence="1" type="primary">mdh</name>
    <name type="ordered locus">Hhal_0830</name>
</gene>
<reference key="1">
    <citation type="submission" date="2006-12" db="EMBL/GenBank/DDBJ databases">
        <title>Complete sequence of Halorhodospira halophila SL1.</title>
        <authorList>
            <consortium name="US DOE Joint Genome Institute"/>
            <person name="Copeland A."/>
            <person name="Lucas S."/>
            <person name="Lapidus A."/>
            <person name="Barry K."/>
            <person name="Detter J.C."/>
            <person name="Glavina del Rio T."/>
            <person name="Hammon N."/>
            <person name="Israni S."/>
            <person name="Dalin E."/>
            <person name="Tice H."/>
            <person name="Pitluck S."/>
            <person name="Saunders E."/>
            <person name="Brettin T."/>
            <person name="Bruce D."/>
            <person name="Han C."/>
            <person name="Tapia R."/>
            <person name="Schmutz J."/>
            <person name="Larimer F."/>
            <person name="Land M."/>
            <person name="Hauser L."/>
            <person name="Kyrpides N."/>
            <person name="Mikhailova N."/>
            <person name="Hoff W."/>
            <person name="Richardson P."/>
        </authorList>
    </citation>
    <scope>NUCLEOTIDE SEQUENCE [LARGE SCALE GENOMIC DNA]</scope>
    <source>
        <strain>DSM 244 / SL1</strain>
    </source>
</reference>
<protein>
    <recommendedName>
        <fullName evidence="1">Malate dehydrogenase</fullName>
        <ecNumber evidence="1">1.1.1.37</ecNumber>
    </recommendedName>
</protein>
<proteinExistence type="inferred from homology"/>
<comment type="function">
    <text evidence="1">Catalyzes the reversible oxidation of malate to oxaloacetate.</text>
</comment>
<comment type="catalytic activity">
    <reaction evidence="1">
        <text>(S)-malate + NAD(+) = oxaloacetate + NADH + H(+)</text>
        <dbReference type="Rhea" id="RHEA:21432"/>
        <dbReference type="ChEBI" id="CHEBI:15378"/>
        <dbReference type="ChEBI" id="CHEBI:15589"/>
        <dbReference type="ChEBI" id="CHEBI:16452"/>
        <dbReference type="ChEBI" id="CHEBI:57540"/>
        <dbReference type="ChEBI" id="CHEBI:57945"/>
        <dbReference type="EC" id="1.1.1.37"/>
    </reaction>
</comment>
<comment type="similarity">
    <text evidence="1">Belongs to the LDH/MDH superfamily. MDH type 2 family.</text>
</comment>
<dbReference type="EC" id="1.1.1.37" evidence="1"/>
<dbReference type="EMBL" id="CP000544">
    <property type="protein sequence ID" value="ABM61606.1"/>
    <property type="molecule type" value="Genomic_DNA"/>
</dbReference>
<dbReference type="RefSeq" id="WP_011813629.1">
    <property type="nucleotide sequence ID" value="NC_008789.1"/>
</dbReference>
<dbReference type="SMR" id="A1WV94"/>
<dbReference type="STRING" id="349124.Hhal_0830"/>
<dbReference type="KEGG" id="hha:Hhal_0830"/>
<dbReference type="eggNOG" id="COG0039">
    <property type="taxonomic scope" value="Bacteria"/>
</dbReference>
<dbReference type="HOGENOM" id="CLU_040727_2_0_6"/>
<dbReference type="OrthoDB" id="9802969at2"/>
<dbReference type="Proteomes" id="UP000000647">
    <property type="component" value="Chromosome"/>
</dbReference>
<dbReference type="GO" id="GO:0030060">
    <property type="term" value="F:L-malate dehydrogenase (NAD+) activity"/>
    <property type="evidence" value="ECO:0007669"/>
    <property type="project" value="UniProtKB-UniRule"/>
</dbReference>
<dbReference type="GO" id="GO:0006108">
    <property type="term" value="P:malate metabolic process"/>
    <property type="evidence" value="ECO:0007669"/>
    <property type="project" value="InterPro"/>
</dbReference>
<dbReference type="GO" id="GO:0006099">
    <property type="term" value="P:tricarboxylic acid cycle"/>
    <property type="evidence" value="ECO:0007669"/>
    <property type="project" value="UniProtKB-UniRule"/>
</dbReference>
<dbReference type="CDD" id="cd01338">
    <property type="entry name" value="MDH_chloroplast-like"/>
    <property type="match status" value="1"/>
</dbReference>
<dbReference type="FunFam" id="3.40.50.720:FF:000010">
    <property type="entry name" value="Malate dehydrogenase"/>
    <property type="match status" value="1"/>
</dbReference>
<dbReference type="FunFam" id="3.90.110.10:FF:000002">
    <property type="entry name" value="Malate dehydrogenase"/>
    <property type="match status" value="1"/>
</dbReference>
<dbReference type="Gene3D" id="3.90.110.10">
    <property type="entry name" value="Lactate dehydrogenase/glycoside hydrolase, family 4, C-terminal"/>
    <property type="match status" value="1"/>
</dbReference>
<dbReference type="Gene3D" id="3.40.50.720">
    <property type="entry name" value="NAD(P)-binding Rossmann-like Domain"/>
    <property type="match status" value="1"/>
</dbReference>
<dbReference type="HAMAP" id="MF_01517">
    <property type="entry name" value="Malate_dehydrog_2"/>
    <property type="match status" value="1"/>
</dbReference>
<dbReference type="InterPro" id="IPR001557">
    <property type="entry name" value="L-lactate/malate_DH"/>
</dbReference>
<dbReference type="InterPro" id="IPR022383">
    <property type="entry name" value="Lactate/malate_DH_C"/>
</dbReference>
<dbReference type="InterPro" id="IPR001236">
    <property type="entry name" value="Lactate/malate_DH_N"/>
</dbReference>
<dbReference type="InterPro" id="IPR015955">
    <property type="entry name" value="Lactate_DH/Glyco_Ohase_4_C"/>
</dbReference>
<dbReference type="InterPro" id="IPR001252">
    <property type="entry name" value="Malate_DH_AS"/>
</dbReference>
<dbReference type="InterPro" id="IPR010945">
    <property type="entry name" value="Malate_DH_type2"/>
</dbReference>
<dbReference type="InterPro" id="IPR036291">
    <property type="entry name" value="NAD(P)-bd_dom_sf"/>
</dbReference>
<dbReference type="NCBIfam" id="TIGR01759">
    <property type="entry name" value="MalateDH-SF1"/>
    <property type="match status" value="1"/>
</dbReference>
<dbReference type="NCBIfam" id="NF003916">
    <property type="entry name" value="PRK05442.1"/>
    <property type="match status" value="1"/>
</dbReference>
<dbReference type="PANTHER" id="PTHR23382">
    <property type="entry name" value="MALATE DEHYDROGENASE"/>
    <property type="match status" value="1"/>
</dbReference>
<dbReference type="Pfam" id="PF02866">
    <property type="entry name" value="Ldh_1_C"/>
    <property type="match status" value="1"/>
</dbReference>
<dbReference type="Pfam" id="PF00056">
    <property type="entry name" value="Ldh_1_N"/>
    <property type="match status" value="1"/>
</dbReference>
<dbReference type="PIRSF" id="PIRSF000102">
    <property type="entry name" value="Lac_mal_DH"/>
    <property type="match status" value="1"/>
</dbReference>
<dbReference type="SUPFAM" id="SSF56327">
    <property type="entry name" value="LDH C-terminal domain-like"/>
    <property type="match status" value="1"/>
</dbReference>
<dbReference type="SUPFAM" id="SSF51735">
    <property type="entry name" value="NAD(P)-binding Rossmann-fold domains"/>
    <property type="match status" value="1"/>
</dbReference>
<dbReference type="PROSITE" id="PS00068">
    <property type="entry name" value="MDH"/>
    <property type="match status" value="1"/>
</dbReference>
<name>MDH_HALHL</name>
<organism>
    <name type="scientific">Halorhodospira halophila (strain DSM 244 / SL1)</name>
    <name type="common">Ectothiorhodospira halophila (strain DSM 244 / SL1)</name>
    <dbReference type="NCBI Taxonomy" id="349124"/>
    <lineage>
        <taxon>Bacteria</taxon>
        <taxon>Pseudomonadati</taxon>
        <taxon>Pseudomonadota</taxon>
        <taxon>Gammaproteobacteria</taxon>
        <taxon>Chromatiales</taxon>
        <taxon>Ectothiorhodospiraceae</taxon>
        <taxon>Halorhodospira</taxon>
    </lineage>
</organism>
<keyword id="KW-0520">NAD</keyword>
<keyword id="KW-0560">Oxidoreductase</keyword>
<keyword id="KW-1185">Reference proteome</keyword>
<keyword id="KW-0816">Tricarboxylic acid cycle</keyword>
<sequence length="326" mass="34688">MKAPVRVAVTGAAGQIGYSLLFRIAAGEMLGKDQPVTLQLLEIPQAQEALQGTVMELEDCAFPLVDGIIATDSAEEAFRDADYVLLVGAKPRGPGMERKDLLEANAAIFSAQGQALNAVAKRDVKVLAVGNPANTNALITQRNAPDLDPRNFTAMTRLDHNRALAQLSNKVGCHSTEIRGLAVWGNHSATQYPDISHCTIQGRPAADQVEHAWVKDTFIPTVQQRGAAIIKARGASSAASAASAAIDHMRDWALGTPEGEWTSMAVPSDGSYGIEAGLIYSFPVTCRGGDYKIVSGLSVDDFSRARMDQTAAELAEERDAVAHLLP</sequence>
<feature type="chain" id="PRO_0000294387" description="Malate dehydrogenase">
    <location>
        <begin position="1"/>
        <end position="326"/>
    </location>
</feature>
<feature type="active site" description="Proton acceptor" evidence="1">
    <location>
        <position position="187"/>
    </location>
</feature>
<feature type="binding site" evidence="1">
    <location>
        <begin position="11"/>
        <end position="17"/>
    </location>
    <ligand>
        <name>NAD(+)</name>
        <dbReference type="ChEBI" id="CHEBI:57540"/>
    </ligand>
</feature>
<feature type="binding site" evidence="1">
    <location>
        <position position="92"/>
    </location>
    <ligand>
        <name>substrate</name>
    </ligand>
</feature>
<feature type="binding site" evidence="1">
    <location>
        <position position="98"/>
    </location>
    <ligand>
        <name>substrate</name>
    </ligand>
</feature>
<feature type="binding site" evidence="1">
    <location>
        <position position="105"/>
    </location>
    <ligand>
        <name>NAD(+)</name>
        <dbReference type="ChEBI" id="CHEBI:57540"/>
    </ligand>
</feature>
<feature type="binding site" evidence="1">
    <location>
        <position position="112"/>
    </location>
    <ligand>
        <name>NAD(+)</name>
        <dbReference type="ChEBI" id="CHEBI:57540"/>
    </ligand>
</feature>
<feature type="binding site" evidence="1">
    <location>
        <begin position="129"/>
        <end position="131"/>
    </location>
    <ligand>
        <name>NAD(+)</name>
        <dbReference type="ChEBI" id="CHEBI:57540"/>
    </ligand>
</feature>
<feature type="binding site" evidence="1">
    <location>
        <position position="131"/>
    </location>
    <ligand>
        <name>substrate</name>
    </ligand>
</feature>
<feature type="binding site" evidence="1">
    <location>
        <position position="162"/>
    </location>
    <ligand>
        <name>substrate</name>
    </ligand>
</feature>
<evidence type="ECO:0000255" key="1">
    <source>
        <dbReference type="HAMAP-Rule" id="MF_01517"/>
    </source>
</evidence>
<accession>A1WV94</accession>